<keyword id="KW-0238">DNA-binding</keyword>
<keyword id="KW-0479">Metal-binding</keyword>
<keyword id="KW-0539">Nucleus</keyword>
<keyword id="KW-1185">Reference proteome</keyword>
<keyword id="KW-0804">Transcription</keyword>
<keyword id="KW-0805">Transcription regulation</keyword>
<keyword id="KW-0862">Zinc</keyword>
<keyword id="KW-0863">Zinc-finger</keyword>
<comment type="function">
    <text evidence="1 4 5">Transcriptional regulator that specifically binds 5'-GATA-3' or 5'-GAT-3' motifs within gene promoters. Regulates both flower and shoot apical meristem (SAM) development, especially for establishing organ boundaries in shoots and flowers, probably by controlling the number and position of WUS-expressing cells (PubMed:23335616, PubMed:25077795).</text>
</comment>
<comment type="subunit">
    <text evidence="4">Forms heterodimers with GATA18.</text>
</comment>
<comment type="subcellular location">
    <subcellularLocation>
        <location evidence="8">Nucleus</location>
    </subcellularLocation>
</comment>
<comment type="developmental stage">
    <text evidence="4">Expressed throughout the inflorescence meristem (IM) and early stages of floral primordia. In developing flowers, restricted to the innert hree whorls, speci fi cally in the petals, stamens, and carpels. Within the stamens, mostly detected in the anther locules as well as in the vascular strands. In carpels, mainly present in ovules.</text>
</comment>
<comment type="induction">
    <text evidence="4">Repressed by HAN.</text>
</comment>
<comment type="disruption phenotype">
    <text evidence="4">Effects on sepal fusion, petal number, fertility defects, and carpel abnormality.</text>
</comment>
<comment type="similarity">
    <text evidence="8">Belongs to the type IV zinc-finger family. Class B subfamily.</text>
</comment>
<evidence type="ECO:0000250" key="1"/>
<evidence type="ECO:0000255" key="2">
    <source>
        <dbReference type="PROSITE-ProRule" id="PRU00094"/>
    </source>
</evidence>
<evidence type="ECO:0000256" key="3">
    <source>
        <dbReference type="SAM" id="MobiDB-lite"/>
    </source>
</evidence>
<evidence type="ECO:0000269" key="4">
    <source>
    </source>
</evidence>
<evidence type="ECO:0000269" key="5">
    <source>
    </source>
</evidence>
<evidence type="ECO:0000303" key="6">
    <source>
    </source>
</evidence>
<evidence type="ECO:0000303" key="7">
    <source>
    </source>
</evidence>
<evidence type="ECO:0000305" key="8"/>
<evidence type="ECO:0000312" key="9">
    <source>
        <dbReference type="Araport" id="AT4G36620"/>
    </source>
</evidence>
<evidence type="ECO:0000312" key="10">
    <source>
        <dbReference type="EMBL" id="CAB80328.1"/>
    </source>
</evidence>
<reference key="1">
    <citation type="journal article" date="2007" name="Plant Physiol.">
        <title>Conservation, convergence, and divergence of light-responsive, circadian-regulated, and tissue-specific expression patterns during evolution of the Arabidopsis GATA gene family.</title>
        <authorList>
            <person name="Manfield I.W."/>
            <person name="Devlin P.F."/>
            <person name="Jen C.-H."/>
            <person name="Westhead D.R."/>
            <person name="Gilmartin P.M."/>
        </authorList>
    </citation>
    <scope>NUCLEOTIDE SEQUENCE [MRNA]</scope>
    <scope>GENE FAMILY</scope>
    <scope>NOMENCLATURE</scope>
</reference>
<reference key="2">
    <citation type="submission" date="2009-03" db="EMBL/GenBank/DDBJ databases">
        <title>ORF cloning and analysis of Arabidopsis transcription factor genes.</title>
        <authorList>
            <person name="Fujita M."/>
        </authorList>
    </citation>
    <scope>NUCLEOTIDE SEQUENCE [MRNA]</scope>
</reference>
<reference key="3">
    <citation type="journal article" date="1998" name="Nature">
        <title>Analysis of 1.9 Mb of contiguous sequence from chromosome 4 of Arabidopsis thaliana.</title>
        <authorList>
            <person name="Bevan M."/>
            <person name="Bancroft I."/>
            <person name="Bent E."/>
            <person name="Love K."/>
            <person name="Goodman H.M."/>
            <person name="Dean C."/>
            <person name="Bergkamp R."/>
            <person name="Dirkse W."/>
            <person name="van Staveren M."/>
            <person name="Stiekema W."/>
            <person name="Drost L."/>
            <person name="Ridley P."/>
            <person name="Hudson S.-A."/>
            <person name="Patel K."/>
            <person name="Murphy G."/>
            <person name="Piffanelli P."/>
            <person name="Wedler H."/>
            <person name="Wedler E."/>
            <person name="Wambutt R."/>
            <person name="Weitzenegger T."/>
            <person name="Pohl T."/>
            <person name="Terryn N."/>
            <person name="Gielen J."/>
            <person name="Villarroel R."/>
            <person name="De Clercq R."/>
            <person name="van Montagu M."/>
            <person name="Lecharny A."/>
            <person name="Aubourg S."/>
            <person name="Gy I."/>
            <person name="Kreis M."/>
            <person name="Lao N."/>
            <person name="Kavanagh T."/>
            <person name="Hempel S."/>
            <person name="Kotter P."/>
            <person name="Entian K.-D."/>
            <person name="Rieger M."/>
            <person name="Schaefer M."/>
            <person name="Funk B."/>
            <person name="Mueller-Auer S."/>
            <person name="Silvey M."/>
            <person name="James R."/>
            <person name="Monfort A."/>
            <person name="Pons A."/>
            <person name="Puigdomenech P."/>
            <person name="Douka A."/>
            <person name="Voukelatou E."/>
            <person name="Milioni D."/>
            <person name="Hatzopoulos P."/>
            <person name="Piravandi E."/>
            <person name="Obermaier B."/>
            <person name="Hilbert H."/>
            <person name="Duesterhoeft A."/>
            <person name="Moores T."/>
            <person name="Jones J.D.G."/>
            <person name="Eneva T."/>
            <person name="Palme K."/>
            <person name="Benes V."/>
            <person name="Rechmann S."/>
            <person name="Ansorge W."/>
            <person name="Cooke R."/>
            <person name="Berger C."/>
            <person name="Delseny M."/>
            <person name="Voet M."/>
            <person name="Volckaert G."/>
            <person name="Mewes H.-W."/>
            <person name="Klosterman S."/>
            <person name="Schueller C."/>
            <person name="Chalwatzis N."/>
        </authorList>
    </citation>
    <scope>NUCLEOTIDE SEQUENCE [LARGE SCALE GENOMIC DNA]</scope>
    <source>
        <strain>cv. Columbia</strain>
    </source>
</reference>
<reference key="4">
    <citation type="journal article" date="1999" name="Nature">
        <title>Sequence and analysis of chromosome 4 of the plant Arabidopsis thaliana.</title>
        <authorList>
            <person name="Mayer K.F.X."/>
            <person name="Schueller C."/>
            <person name="Wambutt R."/>
            <person name="Murphy G."/>
            <person name="Volckaert G."/>
            <person name="Pohl T."/>
            <person name="Duesterhoeft A."/>
            <person name="Stiekema W."/>
            <person name="Entian K.-D."/>
            <person name="Terryn N."/>
            <person name="Harris B."/>
            <person name="Ansorge W."/>
            <person name="Brandt P."/>
            <person name="Grivell L.A."/>
            <person name="Rieger M."/>
            <person name="Weichselgartner M."/>
            <person name="de Simone V."/>
            <person name="Obermaier B."/>
            <person name="Mache R."/>
            <person name="Mueller M."/>
            <person name="Kreis M."/>
            <person name="Delseny M."/>
            <person name="Puigdomenech P."/>
            <person name="Watson M."/>
            <person name="Schmidtheini T."/>
            <person name="Reichert B."/>
            <person name="Portetelle D."/>
            <person name="Perez-Alonso M."/>
            <person name="Boutry M."/>
            <person name="Bancroft I."/>
            <person name="Vos P."/>
            <person name="Hoheisel J."/>
            <person name="Zimmermann W."/>
            <person name="Wedler H."/>
            <person name="Ridley P."/>
            <person name="Langham S.-A."/>
            <person name="McCullagh B."/>
            <person name="Bilham L."/>
            <person name="Robben J."/>
            <person name="van der Schueren J."/>
            <person name="Grymonprez B."/>
            <person name="Chuang Y.-J."/>
            <person name="Vandenbussche F."/>
            <person name="Braeken M."/>
            <person name="Weltjens I."/>
            <person name="Voet M."/>
            <person name="Bastiaens I."/>
            <person name="Aert R."/>
            <person name="Defoor E."/>
            <person name="Weitzenegger T."/>
            <person name="Bothe G."/>
            <person name="Ramsperger U."/>
            <person name="Hilbert H."/>
            <person name="Braun M."/>
            <person name="Holzer E."/>
            <person name="Brandt A."/>
            <person name="Peters S."/>
            <person name="van Staveren M."/>
            <person name="Dirkse W."/>
            <person name="Mooijman P."/>
            <person name="Klein Lankhorst R."/>
            <person name="Rose M."/>
            <person name="Hauf J."/>
            <person name="Koetter P."/>
            <person name="Berneiser S."/>
            <person name="Hempel S."/>
            <person name="Feldpausch M."/>
            <person name="Lamberth S."/>
            <person name="Van den Daele H."/>
            <person name="De Keyser A."/>
            <person name="Buysshaert C."/>
            <person name="Gielen J."/>
            <person name="Villarroel R."/>
            <person name="De Clercq R."/>
            <person name="van Montagu M."/>
            <person name="Rogers J."/>
            <person name="Cronin A."/>
            <person name="Quail M.A."/>
            <person name="Bray-Allen S."/>
            <person name="Clark L."/>
            <person name="Doggett J."/>
            <person name="Hall S."/>
            <person name="Kay M."/>
            <person name="Lennard N."/>
            <person name="McLay K."/>
            <person name="Mayes R."/>
            <person name="Pettett A."/>
            <person name="Rajandream M.A."/>
            <person name="Lyne M."/>
            <person name="Benes V."/>
            <person name="Rechmann S."/>
            <person name="Borkova D."/>
            <person name="Bloecker H."/>
            <person name="Scharfe M."/>
            <person name="Grimm M."/>
            <person name="Loehnert T.-H."/>
            <person name="Dose S."/>
            <person name="de Haan M."/>
            <person name="Maarse A.C."/>
            <person name="Schaefer M."/>
            <person name="Mueller-Auer S."/>
            <person name="Gabel C."/>
            <person name="Fuchs M."/>
            <person name="Fartmann B."/>
            <person name="Granderath K."/>
            <person name="Dauner D."/>
            <person name="Herzl A."/>
            <person name="Neumann S."/>
            <person name="Argiriou A."/>
            <person name="Vitale D."/>
            <person name="Liguori R."/>
            <person name="Piravandi E."/>
            <person name="Massenet O."/>
            <person name="Quigley F."/>
            <person name="Clabauld G."/>
            <person name="Muendlein A."/>
            <person name="Felber R."/>
            <person name="Schnabl S."/>
            <person name="Hiller R."/>
            <person name="Schmidt W."/>
            <person name="Lecharny A."/>
            <person name="Aubourg S."/>
            <person name="Chefdor F."/>
            <person name="Cooke R."/>
            <person name="Berger C."/>
            <person name="Monfort A."/>
            <person name="Casacuberta E."/>
            <person name="Gibbons T."/>
            <person name="Weber N."/>
            <person name="Vandenbol M."/>
            <person name="Bargues M."/>
            <person name="Terol J."/>
            <person name="Torres A."/>
            <person name="Perez-Perez A."/>
            <person name="Purnelle B."/>
            <person name="Bent E."/>
            <person name="Johnson S."/>
            <person name="Tacon D."/>
            <person name="Jesse T."/>
            <person name="Heijnen L."/>
            <person name="Schwarz S."/>
            <person name="Scholler P."/>
            <person name="Heber S."/>
            <person name="Francs P."/>
            <person name="Bielke C."/>
            <person name="Frishman D."/>
            <person name="Haase D."/>
            <person name="Lemcke K."/>
            <person name="Mewes H.-W."/>
            <person name="Stocker S."/>
            <person name="Zaccaria P."/>
            <person name="Bevan M."/>
            <person name="Wilson R.K."/>
            <person name="de la Bastide M."/>
            <person name="Habermann K."/>
            <person name="Parnell L."/>
            <person name="Dedhia N."/>
            <person name="Gnoj L."/>
            <person name="Schutz K."/>
            <person name="Huang E."/>
            <person name="Spiegel L."/>
            <person name="Sekhon M."/>
            <person name="Murray J."/>
            <person name="Sheet P."/>
            <person name="Cordes M."/>
            <person name="Abu-Threideh J."/>
            <person name="Stoneking T."/>
            <person name="Kalicki J."/>
            <person name="Graves T."/>
            <person name="Harmon G."/>
            <person name="Edwards J."/>
            <person name="Latreille P."/>
            <person name="Courtney L."/>
            <person name="Cloud J."/>
            <person name="Abbott A."/>
            <person name="Scott K."/>
            <person name="Johnson D."/>
            <person name="Minx P."/>
            <person name="Bentley D."/>
            <person name="Fulton B."/>
            <person name="Miller N."/>
            <person name="Greco T."/>
            <person name="Kemp K."/>
            <person name="Kramer J."/>
            <person name="Fulton L."/>
            <person name="Mardis E."/>
            <person name="Dante M."/>
            <person name="Pepin K."/>
            <person name="Hillier L.W."/>
            <person name="Nelson J."/>
            <person name="Spieth J."/>
            <person name="Ryan E."/>
            <person name="Andrews S."/>
            <person name="Geisel C."/>
            <person name="Layman D."/>
            <person name="Du H."/>
            <person name="Ali J."/>
            <person name="Berghoff A."/>
            <person name="Jones K."/>
            <person name="Drone K."/>
            <person name="Cotton M."/>
            <person name="Joshu C."/>
            <person name="Antonoiu B."/>
            <person name="Zidanic M."/>
            <person name="Strong C."/>
            <person name="Sun H."/>
            <person name="Lamar B."/>
            <person name="Yordan C."/>
            <person name="Ma P."/>
            <person name="Zhong J."/>
            <person name="Preston R."/>
            <person name="Vil D."/>
            <person name="Shekher M."/>
            <person name="Matero A."/>
            <person name="Shah R."/>
            <person name="Swaby I.K."/>
            <person name="O'Shaughnessy A."/>
            <person name="Rodriguez M."/>
            <person name="Hoffman J."/>
            <person name="Till S."/>
            <person name="Granat S."/>
            <person name="Shohdy N."/>
            <person name="Hasegawa A."/>
            <person name="Hameed A."/>
            <person name="Lodhi M."/>
            <person name="Johnson A."/>
            <person name="Chen E."/>
            <person name="Marra M.A."/>
            <person name="Martienssen R."/>
            <person name="McCombie W.R."/>
        </authorList>
    </citation>
    <scope>NUCLEOTIDE SEQUENCE [LARGE SCALE GENOMIC DNA]</scope>
    <source>
        <strain>cv. Columbia</strain>
    </source>
</reference>
<reference key="5">
    <citation type="journal article" date="2017" name="Plant J.">
        <title>Araport11: a complete reannotation of the Arabidopsis thaliana reference genome.</title>
        <authorList>
            <person name="Cheng C.Y."/>
            <person name="Krishnakumar V."/>
            <person name="Chan A.P."/>
            <person name="Thibaud-Nissen F."/>
            <person name="Schobel S."/>
            <person name="Town C.D."/>
        </authorList>
    </citation>
    <scope>GENOME REANNOTATION</scope>
    <source>
        <strain>cv. Columbia</strain>
    </source>
</reference>
<reference key="6">
    <citation type="submission" date="2006-12" db="EMBL/GenBank/DDBJ databases">
        <title>Arabidopsis ORF clones.</title>
        <authorList>
            <person name="Bautista V.R."/>
            <person name="Kim C.J."/>
            <person name="Chen H."/>
            <person name="Quinitio C."/>
            <person name="Ecker J.R."/>
        </authorList>
    </citation>
    <scope>NUCLEOTIDE SEQUENCE [LARGE SCALE MRNA]</scope>
    <source>
        <strain>cv. Columbia</strain>
    </source>
</reference>
<reference key="7">
    <citation type="journal article" date="2004" name="Plant J.">
        <title>Efficient discovery of DNA polymorphisms in natural populations by Ecotilling.</title>
        <authorList>
            <person name="Comai L."/>
            <person name="Young K."/>
            <person name="Till B.J."/>
            <person name="Reynolds S.H."/>
            <person name="Greene E.A."/>
            <person name="Codomo C.A."/>
            <person name="Enns L.C."/>
            <person name="Johnson J.E."/>
            <person name="Burtner C."/>
            <person name="Odden A.R."/>
            <person name="Henikoff S."/>
        </authorList>
    </citation>
    <scope>NUCLEOTIDE SEQUENCE [GENOMIC DNA] OF 1-201</scope>
    <source>
        <strain>cv. Columbia</strain>
    </source>
</reference>
<reference key="8">
    <citation type="journal article" date="2004" name="Plant Cell">
        <title>HANABA TARANU is a GATA transcription factor that regulates shoot apical meristem and flower development in Arabidopsis.</title>
        <authorList>
            <person name="Zhao Y."/>
            <person name="Medrano L."/>
            <person name="Ohashi K."/>
            <person name="Fletcher J.C."/>
            <person name="Yu H."/>
            <person name="Sakai H."/>
            <person name="Meyerowitz E.M."/>
        </authorList>
    </citation>
    <scope>GENE FAMILY</scope>
    <scope>NOMENCLATURE</scope>
    <source>
        <strain>cv. Columbia</strain>
        <strain>cv. Landsberg erecta</strain>
        <strain>cv. Wassilewskija</strain>
    </source>
</reference>
<reference key="9">
    <citation type="journal article" date="2004" name="Plant Physiol.">
        <title>The GATA family of transcription factors in Arabidopsis and rice.</title>
        <authorList>
            <person name="Reyes J.C."/>
            <person name="Muro-Pastor M.I."/>
            <person name="Florencio F.J."/>
        </authorList>
    </citation>
    <scope>GENE FAMILY ORGANIZATION</scope>
</reference>
<reference key="10">
    <citation type="journal article" date="2013" name="Plant Cell">
        <title>Transcription repressor HANABA TARANU controls flower development by integrating the actions of multiple hormones, floral organ specification genes, and GATA3 family genes in Arabidopsis.</title>
        <authorList>
            <person name="Zhang X."/>
            <person name="Zhou Y."/>
            <person name="Ding L."/>
            <person name="Wu Z."/>
            <person name="Liu R."/>
            <person name="Meyerowitz E.M."/>
        </authorList>
    </citation>
    <scope>FUNCTION</scope>
    <scope>DISRUPTION PHENOTYPE</scope>
    <scope>REPRESSION BY HAN</scope>
    <scope>INTERACTION WITH GATA18</scope>
    <scope>DEVELOPMENTAL STAGE</scope>
</reference>
<reference key="11">
    <citation type="journal article" date="2014" name="Plant Physiol.">
        <title>Functional diversification within the family of B-GATA transcription factors through the leucine-leucine-methionine domain.</title>
        <authorList>
            <person name="Behringer C."/>
            <person name="Bastakis E."/>
            <person name="Ranftl Q.L."/>
            <person name="Mayer K.F."/>
            <person name="Schwechheimer C."/>
        </authorList>
    </citation>
    <scope>FUNCTION</scope>
</reference>
<feature type="chain" id="PRO_0000083450" description="GATA transcription factor 19">
    <location>
        <begin position="1"/>
        <end position="211"/>
    </location>
</feature>
<feature type="zinc finger region" description="GATA-type" evidence="2">
    <location>
        <begin position="77"/>
        <end position="102"/>
    </location>
</feature>
<feature type="region of interest" description="Disordered" evidence="3">
    <location>
        <begin position="111"/>
        <end position="131"/>
    </location>
</feature>
<accession>Q6QPM2</accession>
<accession>A1A6I6</accession>
<accession>A3E4C0</accession>
<accession>C0SVL8</accession>
<accession>O23219</accession>
<protein>
    <recommendedName>
        <fullName evidence="6">GATA transcription factor 19</fullName>
    </recommendedName>
    <alternativeName>
        <fullName evidence="7">Protein HAN-LIKE 2</fullName>
    </alternativeName>
</protein>
<dbReference type="EMBL" id="DQ875130">
    <property type="protein sequence ID" value="ABL73200.1"/>
    <property type="molecule type" value="mRNA"/>
</dbReference>
<dbReference type="EMBL" id="AB493721">
    <property type="protein sequence ID" value="BAH30559.1"/>
    <property type="molecule type" value="mRNA"/>
</dbReference>
<dbReference type="EMBL" id="Z99708">
    <property type="protein sequence ID" value="CAB16831.1"/>
    <property type="molecule type" value="Genomic_DNA"/>
</dbReference>
<dbReference type="EMBL" id="AL161589">
    <property type="protein sequence ID" value="CAB80328.1"/>
    <property type="molecule type" value="Genomic_DNA"/>
</dbReference>
<dbReference type="EMBL" id="CP002687">
    <property type="protein sequence ID" value="AEE86678.1"/>
    <property type="molecule type" value="Genomic_DNA"/>
</dbReference>
<dbReference type="EMBL" id="BT029506">
    <property type="protein sequence ID" value="ABL66762.1"/>
    <property type="molecule type" value="mRNA"/>
</dbReference>
<dbReference type="EMBL" id="AY530746">
    <property type="protein sequence ID" value="AAS45431.1"/>
    <property type="molecule type" value="Genomic_DNA"/>
</dbReference>
<dbReference type="PIR" id="D85432">
    <property type="entry name" value="D85432"/>
</dbReference>
<dbReference type="RefSeq" id="NP_195380.1">
    <property type="nucleotide sequence ID" value="NM_119825.3"/>
</dbReference>
<dbReference type="SMR" id="Q6QPM2"/>
<dbReference type="BioGRID" id="15096">
    <property type="interactions" value="12"/>
</dbReference>
<dbReference type="FunCoup" id="Q6QPM2">
    <property type="interactions" value="2"/>
</dbReference>
<dbReference type="IntAct" id="Q6QPM2">
    <property type="interactions" value="13"/>
</dbReference>
<dbReference type="STRING" id="3702.Q6QPM2"/>
<dbReference type="PaxDb" id="3702-AT4G36620.1"/>
<dbReference type="EnsemblPlants" id="AT4G36620.1">
    <property type="protein sequence ID" value="AT4G36620.1"/>
    <property type="gene ID" value="AT4G36620"/>
</dbReference>
<dbReference type="GeneID" id="829814"/>
<dbReference type="Gramene" id="AT4G36620.1">
    <property type="protein sequence ID" value="AT4G36620.1"/>
    <property type="gene ID" value="AT4G36620"/>
</dbReference>
<dbReference type="KEGG" id="ath:AT4G36620"/>
<dbReference type="Araport" id="AT4G36620"/>
<dbReference type="TAIR" id="AT4G36620">
    <property type="gene designation" value="GATA19"/>
</dbReference>
<dbReference type="eggNOG" id="KOG1601">
    <property type="taxonomic scope" value="Eukaryota"/>
</dbReference>
<dbReference type="HOGENOM" id="CLU_062129_1_0_1"/>
<dbReference type="InParanoid" id="Q6QPM2"/>
<dbReference type="OMA" id="PANNEYF"/>
<dbReference type="OrthoDB" id="2162994at2759"/>
<dbReference type="PhylomeDB" id="Q6QPM2"/>
<dbReference type="PRO" id="PR:Q6QPM2"/>
<dbReference type="Proteomes" id="UP000006548">
    <property type="component" value="Chromosome 4"/>
</dbReference>
<dbReference type="ExpressionAtlas" id="Q6QPM2">
    <property type="expression patterns" value="baseline and differential"/>
</dbReference>
<dbReference type="GO" id="GO:0005634">
    <property type="term" value="C:nucleus"/>
    <property type="evidence" value="ECO:0007669"/>
    <property type="project" value="UniProtKB-SubCell"/>
</dbReference>
<dbReference type="GO" id="GO:0003700">
    <property type="term" value="F:DNA-binding transcription factor activity"/>
    <property type="evidence" value="ECO:0000250"/>
    <property type="project" value="TAIR"/>
</dbReference>
<dbReference type="GO" id="GO:0000976">
    <property type="term" value="F:transcription cis-regulatory region binding"/>
    <property type="evidence" value="ECO:0000353"/>
    <property type="project" value="TAIR"/>
</dbReference>
<dbReference type="GO" id="GO:0008270">
    <property type="term" value="F:zinc ion binding"/>
    <property type="evidence" value="ECO:0007669"/>
    <property type="project" value="UniProtKB-KW"/>
</dbReference>
<dbReference type="GO" id="GO:0009908">
    <property type="term" value="P:flower development"/>
    <property type="evidence" value="ECO:0000315"/>
    <property type="project" value="UniProtKB"/>
</dbReference>
<dbReference type="CDD" id="cd00202">
    <property type="entry name" value="ZnF_GATA"/>
    <property type="match status" value="1"/>
</dbReference>
<dbReference type="FunFam" id="3.30.50.10:FF:000053">
    <property type="entry name" value="GATA transcription factor 15"/>
    <property type="match status" value="1"/>
</dbReference>
<dbReference type="Gene3D" id="3.30.50.10">
    <property type="entry name" value="Erythroid Transcription Factor GATA-1, subunit A"/>
    <property type="match status" value="1"/>
</dbReference>
<dbReference type="InterPro" id="IPR000679">
    <property type="entry name" value="Znf_GATA"/>
</dbReference>
<dbReference type="InterPro" id="IPR013088">
    <property type="entry name" value="Znf_NHR/GATA"/>
</dbReference>
<dbReference type="PANTHER" id="PTHR46813">
    <property type="entry name" value="GATA TRANSCRIPTION FACTOR 18"/>
    <property type="match status" value="1"/>
</dbReference>
<dbReference type="PANTHER" id="PTHR46813:SF19">
    <property type="entry name" value="GATA TRANSCRIPTION FACTOR 19"/>
    <property type="match status" value="1"/>
</dbReference>
<dbReference type="Pfam" id="PF00320">
    <property type="entry name" value="GATA"/>
    <property type="match status" value="1"/>
</dbReference>
<dbReference type="SMART" id="SM00401">
    <property type="entry name" value="ZnF_GATA"/>
    <property type="match status" value="1"/>
</dbReference>
<dbReference type="SUPFAM" id="SSF57716">
    <property type="entry name" value="Glucocorticoid receptor-like (DNA-binding domain)"/>
    <property type="match status" value="1"/>
</dbReference>
<dbReference type="PROSITE" id="PS00344">
    <property type="entry name" value="GATA_ZN_FINGER_1"/>
    <property type="match status" value="1"/>
</dbReference>
<dbReference type="PROSITE" id="PS50114">
    <property type="entry name" value="GATA_ZN_FINGER_2"/>
    <property type="match status" value="1"/>
</dbReference>
<proteinExistence type="evidence at protein level"/>
<name>GAT19_ARATH</name>
<sequence>MGFSMFFSPENDVSHHSSPYASVDCTLSLGTPSTRLCNEDDERRFSSHTSDTIGWDFLNGSKKGGGGGGHNLLARRCANCDTTSTPLWRNGPRGPKSLCNACGIRFKKEERRASTARNSTSGGGSTAAGVPTLDHQASANYYYNNNNQYASSSPWHHQHNTQRVPYYSPANNEYSYVDDVRVVDHDVTTDPFLSWRLNVADRTGLVHDFTM</sequence>
<gene>
    <name evidence="6" type="primary">GATA19</name>
    <name evidence="7" type="synonym">HANL2</name>
    <name evidence="9" type="ordered locus">At4g36620</name>
    <name evidence="10" type="ORF">C7A10.740</name>
</gene>
<organism>
    <name type="scientific">Arabidopsis thaliana</name>
    <name type="common">Mouse-ear cress</name>
    <dbReference type="NCBI Taxonomy" id="3702"/>
    <lineage>
        <taxon>Eukaryota</taxon>
        <taxon>Viridiplantae</taxon>
        <taxon>Streptophyta</taxon>
        <taxon>Embryophyta</taxon>
        <taxon>Tracheophyta</taxon>
        <taxon>Spermatophyta</taxon>
        <taxon>Magnoliopsida</taxon>
        <taxon>eudicotyledons</taxon>
        <taxon>Gunneridae</taxon>
        <taxon>Pentapetalae</taxon>
        <taxon>rosids</taxon>
        <taxon>malvids</taxon>
        <taxon>Brassicales</taxon>
        <taxon>Brassicaceae</taxon>
        <taxon>Camelineae</taxon>
        <taxon>Arabidopsis</taxon>
    </lineage>
</organism>